<reference key="1">
    <citation type="journal article" date="2003" name="Nature">
        <title>Genome divergence in two Prochlorococcus ecotypes reflects oceanic niche differentiation.</title>
        <authorList>
            <person name="Rocap G."/>
            <person name="Larimer F.W."/>
            <person name="Lamerdin J.E."/>
            <person name="Malfatti S."/>
            <person name="Chain P."/>
            <person name="Ahlgren N.A."/>
            <person name="Arellano A."/>
            <person name="Coleman M."/>
            <person name="Hauser L."/>
            <person name="Hess W.R."/>
            <person name="Johnson Z.I."/>
            <person name="Land M.L."/>
            <person name="Lindell D."/>
            <person name="Post A.F."/>
            <person name="Regala W."/>
            <person name="Shah M."/>
            <person name="Shaw S.L."/>
            <person name="Steglich C."/>
            <person name="Sullivan M.B."/>
            <person name="Ting C.S."/>
            <person name="Tolonen A."/>
            <person name="Webb E.A."/>
            <person name="Zinser E.R."/>
            <person name="Chisholm S.W."/>
        </authorList>
    </citation>
    <scope>NUCLEOTIDE SEQUENCE [LARGE SCALE GENOMIC DNA]</scope>
    <source>
        <strain>CCMP1986 / NIES-2087 / MED4</strain>
    </source>
</reference>
<accession>Q7V388</accession>
<organism>
    <name type="scientific">Prochlorococcus marinus subsp. pastoris (strain CCMP1986 / NIES-2087 / MED4)</name>
    <dbReference type="NCBI Taxonomy" id="59919"/>
    <lineage>
        <taxon>Bacteria</taxon>
        <taxon>Bacillati</taxon>
        <taxon>Cyanobacteriota</taxon>
        <taxon>Cyanophyceae</taxon>
        <taxon>Synechococcales</taxon>
        <taxon>Prochlorococcaceae</taxon>
        <taxon>Prochlorococcus</taxon>
    </lineage>
</organism>
<evidence type="ECO:0000255" key="1">
    <source>
        <dbReference type="HAMAP-Rule" id="MF_00033"/>
    </source>
</evidence>
<protein>
    <recommendedName>
        <fullName evidence="1">UDP-N-acetylglucosamine--N-acetylmuramyl-(pentapeptide) pyrophosphoryl-undecaprenol N-acetylglucosamine transferase</fullName>
        <ecNumber evidence="1">2.4.1.227</ecNumber>
    </recommendedName>
    <alternativeName>
        <fullName evidence="1">Undecaprenyl-PP-MurNAc-pentapeptide-UDPGlcNAc GlcNAc transferase</fullName>
    </alternativeName>
</protein>
<proteinExistence type="inferred from homology"/>
<sequence length="364" mass="41665">MSKKRNNLLIAASGTGGHIFPALAVSKKVEKDWDIHWLGVTKRLDSEFVPSKYNLLTLNLETPKKNIFRVFQYLKILFSIFNIIKILKEKKINLVFTTGGYISAPTILAAKWLKIPVILHESNLIPGTVTKYFGFLCEFVLLGFKDTNYYLKNCKTIFTGTPLRDQFYEINPLPKWVPRGKGPLLIVMGGSQGAKMINEIFYESIDFLIKQNFRIVHIIGENNSNNLVKFKSNNYVQKKFTNQIASLMQNCELVISRSGAGTINELIQTGKPSILIPYPNSKNNHQEKNAMILSSIGGAILMNQNQISKLFFEETLKRILKFKLKKGKPKYEILDLMKENIKNLDTLKSTNEIKKLINYFLKEF</sequence>
<name>MURG_PROMP</name>
<gene>
    <name evidence="1" type="primary">murG</name>
    <name type="ordered locus">PMM0197</name>
</gene>
<dbReference type="EC" id="2.4.1.227" evidence="1"/>
<dbReference type="EMBL" id="BX548174">
    <property type="protein sequence ID" value="CAE18656.1"/>
    <property type="molecule type" value="Genomic_DNA"/>
</dbReference>
<dbReference type="RefSeq" id="WP_011131836.1">
    <property type="nucleotide sequence ID" value="NC_005072.1"/>
</dbReference>
<dbReference type="SMR" id="Q7V388"/>
<dbReference type="STRING" id="59919.PMM0197"/>
<dbReference type="CAZy" id="GT28">
    <property type="family name" value="Glycosyltransferase Family 28"/>
</dbReference>
<dbReference type="KEGG" id="pmm:PMM0197"/>
<dbReference type="eggNOG" id="COG0707">
    <property type="taxonomic scope" value="Bacteria"/>
</dbReference>
<dbReference type="HOGENOM" id="CLU_037404_0_1_3"/>
<dbReference type="OrthoDB" id="9808936at2"/>
<dbReference type="UniPathway" id="UPA00219"/>
<dbReference type="Proteomes" id="UP000001026">
    <property type="component" value="Chromosome"/>
</dbReference>
<dbReference type="GO" id="GO:0005886">
    <property type="term" value="C:plasma membrane"/>
    <property type="evidence" value="ECO:0007669"/>
    <property type="project" value="UniProtKB-SubCell"/>
</dbReference>
<dbReference type="GO" id="GO:0051991">
    <property type="term" value="F:UDP-N-acetyl-D-glucosamine:N-acetylmuramoyl-L-alanyl-D-glutamyl-meso-2,6-diaminopimelyl-D-alanyl-D-alanine-diphosphoundecaprenol 4-beta-N-acetylglucosaminlytransferase activity"/>
    <property type="evidence" value="ECO:0007669"/>
    <property type="project" value="RHEA"/>
</dbReference>
<dbReference type="GO" id="GO:0050511">
    <property type="term" value="F:undecaprenyldiphospho-muramoylpentapeptide beta-N-acetylglucosaminyltransferase activity"/>
    <property type="evidence" value="ECO:0007669"/>
    <property type="project" value="UniProtKB-UniRule"/>
</dbReference>
<dbReference type="GO" id="GO:0005975">
    <property type="term" value="P:carbohydrate metabolic process"/>
    <property type="evidence" value="ECO:0007669"/>
    <property type="project" value="InterPro"/>
</dbReference>
<dbReference type="GO" id="GO:0051301">
    <property type="term" value="P:cell division"/>
    <property type="evidence" value="ECO:0007669"/>
    <property type="project" value="UniProtKB-KW"/>
</dbReference>
<dbReference type="GO" id="GO:0071555">
    <property type="term" value="P:cell wall organization"/>
    <property type="evidence" value="ECO:0007669"/>
    <property type="project" value="UniProtKB-KW"/>
</dbReference>
<dbReference type="GO" id="GO:0030259">
    <property type="term" value="P:lipid glycosylation"/>
    <property type="evidence" value="ECO:0007669"/>
    <property type="project" value="UniProtKB-UniRule"/>
</dbReference>
<dbReference type="GO" id="GO:0009252">
    <property type="term" value="P:peptidoglycan biosynthetic process"/>
    <property type="evidence" value="ECO:0007669"/>
    <property type="project" value="UniProtKB-UniRule"/>
</dbReference>
<dbReference type="GO" id="GO:0008360">
    <property type="term" value="P:regulation of cell shape"/>
    <property type="evidence" value="ECO:0007669"/>
    <property type="project" value="UniProtKB-KW"/>
</dbReference>
<dbReference type="CDD" id="cd03785">
    <property type="entry name" value="GT28_MurG"/>
    <property type="match status" value="1"/>
</dbReference>
<dbReference type="Gene3D" id="3.40.50.2000">
    <property type="entry name" value="Glycogen Phosphorylase B"/>
    <property type="match status" value="2"/>
</dbReference>
<dbReference type="HAMAP" id="MF_00033">
    <property type="entry name" value="MurG"/>
    <property type="match status" value="1"/>
</dbReference>
<dbReference type="InterPro" id="IPR006009">
    <property type="entry name" value="GlcNAc_MurG"/>
</dbReference>
<dbReference type="InterPro" id="IPR007235">
    <property type="entry name" value="Glyco_trans_28_C"/>
</dbReference>
<dbReference type="InterPro" id="IPR004276">
    <property type="entry name" value="GlycoTrans_28_N"/>
</dbReference>
<dbReference type="PANTHER" id="PTHR21015:SF22">
    <property type="entry name" value="GLYCOSYLTRANSFERASE"/>
    <property type="match status" value="1"/>
</dbReference>
<dbReference type="PANTHER" id="PTHR21015">
    <property type="entry name" value="UDP-N-ACETYLGLUCOSAMINE--N-ACETYLMURAMYL-(PENTAPEPTIDE) PYROPHOSPHORYL-UNDECAPRENOL N-ACETYLGLUCOSAMINE TRANSFERASE 1"/>
    <property type="match status" value="1"/>
</dbReference>
<dbReference type="Pfam" id="PF04101">
    <property type="entry name" value="Glyco_tran_28_C"/>
    <property type="match status" value="1"/>
</dbReference>
<dbReference type="Pfam" id="PF03033">
    <property type="entry name" value="Glyco_transf_28"/>
    <property type="match status" value="1"/>
</dbReference>
<dbReference type="SUPFAM" id="SSF53756">
    <property type="entry name" value="UDP-Glycosyltransferase/glycogen phosphorylase"/>
    <property type="match status" value="1"/>
</dbReference>
<feature type="chain" id="PRO_0000225079" description="UDP-N-acetylglucosamine--N-acetylmuramyl-(pentapeptide) pyrophosphoryl-undecaprenol N-acetylglucosamine transferase">
    <location>
        <begin position="1"/>
        <end position="364"/>
    </location>
</feature>
<feature type="binding site" evidence="1">
    <location>
        <begin position="15"/>
        <end position="17"/>
    </location>
    <ligand>
        <name>UDP-N-acetyl-alpha-D-glucosamine</name>
        <dbReference type="ChEBI" id="CHEBI:57705"/>
    </ligand>
</feature>
<feature type="binding site" evidence="1">
    <location>
        <position position="123"/>
    </location>
    <ligand>
        <name>UDP-N-acetyl-alpha-D-glucosamine</name>
        <dbReference type="ChEBI" id="CHEBI:57705"/>
    </ligand>
</feature>
<feature type="binding site" evidence="1">
    <location>
        <position position="164"/>
    </location>
    <ligand>
        <name>UDP-N-acetyl-alpha-D-glucosamine</name>
        <dbReference type="ChEBI" id="CHEBI:57705"/>
    </ligand>
</feature>
<feature type="binding site" evidence="1">
    <location>
        <position position="191"/>
    </location>
    <ligand>
        <name>UDP-N-acetyl-alpha-D-glucosamine</name>
        <dbReference type="ChEBI" id="CHEBI:57705"/>
    </ligand>
</feature>
<feature type="binding site" evidence="1">
    <location>
        <position position="286"/>
    </location>
    <ligand>
        <name>UDP-N-acetyl-alpha-D-glucosamine</name>
        <dbReference type="ChEBI" id="CHEBI:57705"/>
    </ligand>
</feature>
<keyword id="KW-0131">Cell cycle</keyword>
<keyword id="KW-0132">Cell division</keyword>
<keyword id="KW-0997">Cell inner membrane</keyword>
<keyword id="KW-1003">Cell membrane</keyword>
<keyword id="KW-0133">Cell shape</keyword>
<keyword id="KW-0961">Cell wall biogenesis/degradation</keyword>
<keyword id="KW-0328">Glycosyltransferase</keyword>
<keyword id="KW-0472">Membrane</keyword>
<keyword id="KW-0573">Peptidoglycan synthesis</keyword>
<keyword id="KW-0808">Transferase</keyword>
<comment type="function">
    <text evidence="1">Cell wall formation. Catalyzes the transfer of a GlcNAc subunit on undecaprenyl-pyrophosphoryl-MurNAc-pentapeptide (lipid intermediate I) to form undecaprenyl-pyrophosphoryl-MurNAc-(pentapeptide)GlcNAc (lipid intermediate II).</text>
</comment>
<comment type="catalytic activity">
    <reaction evidence="1">
        <text>di-trans,octa-cis-undecaprenyl diphospho-N-acetyl-alpha-D-muramoyl-L-alanyl-D-glutamyl-meso-2,6-diaminopimeloyl-D-alanyl-D-alanine + UDP-N-acetyl-alpha-D-glucosamine = di-trans,octa-cis-undecaprenyl diphospho-[N-acetyl-alpha-D-glucosaminyl-(1-&gt;4)]-N-acetyl-alpha-D-muramoyl-L-alanyl-D-glutamyl-meso-2,6-diaminopimeloyl-D-alanyl-D-alanine + UDP + H(+)</text>
        <dbReference type="Rhea" id="RHEA:31227"/>
        <dbReference type="ChEBI" id="CHEBI:15378"/>
        <dbReference type="ChEBI" id="CHEBI:57705"/>
        <dbReference type="ChEBI" id="CHEBI:58223"/>
        <dbReference type="ChEBI" id="CHEBI:61387"/>
        <dbReference type="ChEBI" id="CHEBI:61388"/>
        <dbReference type="EC" id="2.4.1.227"/>
    </reaction>
</comment>
<comment type="pathway">
    <text evidence="1">Cell wall biogenesis; peptidoglycan biosynthesis.</text>
</comment>
<comment type="subcellular location">
    <subcellularLocation>
        <location evidence="1">Cell inner membrane</location>
        <topology evidence="1">Peripheral membrane protein</topology>
        <orientation evidence="1">Cytoplasmic side</orientation>
    </subcellularLocation>
</comment>
<comment type="similarity">
    <text evidence="1">Belongs to the glycosyltransferase 28 family. MurG subfamily.</text>
</comment>